<proteinExistence type="inferred from homology"/>
<evidence type="ECO:0000255" key="1">
    <source>
        <dbReference type="HAMAP-Rule" id="MF_00150"/>
    </source>
</evidence>
<feature type="chain" id="PRO_1000096736" description="N-acetyl-gamma-glutamyl-phosphate reductase">
    <location>
        <begin position="1"/>
        <end position="344"/>
    </location>
</feature>
<feature type="active site" evidence="1">
    <location>
        <position position="150"/>
    </location>
</feature>
<gene>
    <name evidence="1" type="primary">argC</name>
    <name type="ordered locus">PputW619_4771</name>
</gene>
<sequence>MIKVGIVGGTGYTGVELLRLLAQHPQAEVAVITSRSEAGVAVADMYPNLRGHYDGLAFSVPDSKALSACDVVFFATPHGVAHALAGELLAAGTKVIDLSADFRLQDAAEWAKWYGQPHGAPELLKDAVYGLPEVNREKIRLARLIAVPGCYPTATQLGFLPLLEAGLADPSRLIADCKSGVSGAGRGAAVGSLFCEAGESMKAYAVKGHRHLPEISQGLRLAAGTDIGLTFVPHLTPMIRGIHSTLYATVADKSVDLQALFEKRYADEPFVDVMPAGSHPETRSVRGANVCRIAVHRPQGGDLVVVLSVIDNLVKGASGQAVQNLNILFGLDERMGLSHAGLLP</sequence>
<keyword id="KW-0028">Amino-acid biosynthesis</keyword>
<keyword id="KW-0055">Arginine biosynthesis</keyword>
<keyword id="KW-0963">Cytoplasm</keyword>
<keyword id="KW-0521">NADP</keyword>
<keyword id="KW-0560">Oxidoreductase</keyword>
<name>ARGC_PSEPW</name>
<organism>
    <name type="scientific">Pseudomonas putida (strain W619)</name>
    <dbReference type="NCBI Taxonomy" id="390235"/>
    <lineage>
        <taxon>Bacteria</taxon>
        <taxon>Pseudomonadati</taxon>
        <taxon>Pseudomonadota</taxon>
        <taxon>Gammaproteobacteria</taxon>
        <taxon>Pseudomonadales</taxon>
        <taxon>Pseudomonadaceae</taxon>
        <taxon>Pseudomonas</taxon>
    </lineage>
</organism>
<reference key="1">
    <citation type="submission" date="2008-02" db="EMBL/GenBank/DDBJ databases">
        <title>Complete sequence of Pseudomonas putida W619.</title>
        <authorList>
            <person name="Copeland A."/>
            <person name="Lucas S."/>
            <person name="Lapidus A."/>
            <person name="Barry K."/>
            <person name="Detter J.C."/>
            <person name="Glavina del Rio T."/>
            <person name="Dalin E."/>
            <person name="Tice H."/>
            <person name="Pitluck S."/>
            <person name="Chain P."/>
            <person name="Malfatti S."/>
            <person name="Shin M."/>
            <person name="Vergez L."/>
            <person name="Schmutz J."/>
            <person name="Larimer F."/>
            <person name="Land M."/>
            <person name="Hauser L."/>
            <person name="Kyrpides N."/>
            <person name="Kim E."/>
            <person name="Taghavi S."/>
            <person name="Vangronsveld D."/>
            <person name="van der Lelie D."/>
            <person name="Richardson P."/>
        </authorList>
    </citation>
    <scope>NUCLEOTIDE SEQUENCE [LARGE SCALE GENOMIC DNA]</scope>
    <source>
        <strain>W619</strain>
    </source>
</reference>
<accession>B1JE24</accession>
<protein>
    <recommendedName>
        <fullName evidence="1">N-acetyl-gamma-glutamyl-phosphate reductase</fullName>
        <shortName evidence="1">AGPR</shortName>
        <ecNumber evidence="1">1.2.1.38</ecNumber>
    </recommendedName>
    <alternativeName>
        <fullName evidence="1">N-acetyl-glutamate semialdehyde dehydrogenase</fullName>
        <shortName evidence="1">NAGSA dehydrogenase</shortName>
    </alternativeName>
</protein>
<dbReference type="EC" id="1.2.1.38" evidence="1"/>
<dbReference type="EMBL" id="CP000949">
    <property type="protein sequence ID" value="ACA75247.1"/>
    <property type="molecule type" value="Genomic_DNA"/>
</dbReference>
<dbReference type="SMR" id="B1JE24"/>
<dbReference type="STRING" id="390235.PputW619_4771"/>
<dbReference type="KEGG" id="ppw:PputW619_4771"/>
<dbReference type="eggNOG" id="COG0002">
    <property type="taxonomic scope" value="Bacteria"/>
</dbReference>
<dbReference type="HOGENOM" id="CLU_006384_0_1_6"/>
<dbReference type="OrthoDB" id="9801289at2"/>
<dbReference type="UniPathway" id="UPA00068">
    <property type="reaction ID" value="UER00108"/>
</dbReference>
<dbReference type="GO" id="GO:0005737">
    <property type="term" value="C:cytoplasm"/>
    <property type="evidence" value="ECO:0007669"/>
    <property type="project" value="UniProtKB-SubCell"/>
</dbReference>
<dbReference type="GO" id="GO:0003942">
    <property type="term" value="F:N-acetyl-gamma-glutamyl-phosphate reductase activity"/>
    <property type="evidence" value="ECO:0007669"/>
    <property type="project" value="UniProtKB-UniRule"/>
</dbReference>
<dbReference type="GO" id="GO:0051287">
    <property type="term" value="F:NAD binding"/>
    <property type="evidence" value="ECO:0007669"/>
    <property type="project" value="InterPro"/>
</dbReference>
<dbReference type="GO" id="GO:0070401">
    <property type="term" value="F:NADP+ binding"/>
    <property type="evidence" value="ECO:0007669"/>
    <property type="project" value="InterPro"/>
</dbReference>
<dbReference type="GO" id="GO:0006526">
    <property type="term" value="P:L-arginine biosynthetic process"/>
    <property type="evidence" value="ECO:0007669"/>
    <property type="project" value="UniProtKB-UniRule"/>
</dbReference>
<dbReference type="CDD" id="cd23934">
    <property type="entry name" value="AGPR_1_C"/>
    <property type="match status" value="1"/>
</dbReference>
<dbReference type="CDD" id="cd17895">
    <property type="entry name" value="AGPR_1_N"/>
    <property type="match status" value="1"/>
</dbReference>
<dbReference type="FunFam" id="3.30.360.10:FF:000014">
    <property type="entry name" value="N-acetyl-gamma-glutamyl-phosphate reductase"/>
    <property type="match status" value="1"/>
</dbReference>
<dbReference type="Gene3D" id="3.30.360.10">
    <property type="entry name" value="Dihydrodipicolinate Reductase, domain 2"/>
    <property type="match status" value="1"/>
</dbReference>
<dbReference type="Gene3D" id="3.40.50.720">
    <property type="entry name" value="NAD(P)-binding Rossmann-like Domain"/>
    <property type="match status" value="1"/>
</dbReference>
<dbReference type="HAMAP" id="MF_00150">
    <property type="entry name" value="ArgC_type1"/>
    <property type="match status" value="1"/>
</dbReference>
<dbReference type="InterPro" id="IPR023013">
    <property type="entry name" value="AGPR_AS"/>
</dbReference>
<dbReference type="InterPro" id="IPR000706">
    <property type="entry name" value="AGPR_type-1"/>
</dbReference>
<dbReference type="InterPro" id="IPR036291">
    <property type="entry name" value="NAD(P)-bd_dom_sf"/>
</dbReference>
<dbReference type="InterPro" id="IPR050085">
    <property type="entry name" value="NAGSA_dehydrogenase"/>
</dbReference>
<dbReference type="InterPro" id="IPR000534">
    <property type="entry name" value="Semialdehyde_DH_NAD-bd"/>
</dbReference>
<dbReference type="NCBIfam" id="TIGR01850">
    <property type="entry name" value="argC"/>
    <property type="match status" value="1"/>
</dbReference>
<dbReference type="PANTHER" id="PTHR32338:SF10">
    <property type="entry name" value="N-ACETYL-GAMMA-GLUTAMYL-PHOSPHATE REDUCTASE, CHLOROPLASTIC-RELATED"/>
    <property type="match status" value="1"/>
</dbReference>
<dbReference type="PANTHER" id="PTHR32338">
    <property type="entry name" value="N-ACETYL-GAMMA-GLUTAMYL-PHOSPHATE REDUCTASE, CHLOROPLASTIC-RELATED-RELATED"/>
    <property type="match status" value="1"/>
</dbReference>
<dbReference type="Pfam" id="PF01118">
    <property type="entry name" value="Semialdhyde_dh"/>
    <property type="match status" value="1"/>
</dbReference>
<dbReference type="Pfam" id="PF22698">
    <property type="entry name" value="Semialdhyde_dhC_1"/>
    <property type="match status" value="1"/>
</dbReference>
<dbReference type="SMART" id="SM00859">
    <property type="entry name" value="Semialdhyde_dh"/>
    <property type="match status" value="1"/>
</dbReference>
<dbReference type="SUPFAM" id="SSF55347">
    <property type="entry name" value="Glyceraldehyde-3-phosphate dehydrogenase-like, C-terminal domain"/>
    <property type="match status" value="1"/>
</dbReference>
<dbReference type="SUPFAM" id="SSF51735">
    <property type="entry name" value="NAD(P)-binding Rossmann-fold domains"/>
    <property type="match status" value="1"/>
</dbReference>
<dbReference type="PROSITE" id="PS01224">
    <property type="entry name" value="ARGC"/>
    <property type="match status" value="1"/>
</dbReference>
<comment type="function">
    <text evidence="1">Catalyzes the NADPH-dependent reduction of N-acetyl-5-glutamyl phosphate to yield N-acetyl-L-glutamate 5-semialdehyde.</text>
</comment>
<comment type="catalytic activity">
    <reaction evidence="1">
        <text>N-acetyl-L-glutamate 5-semialdehyde + phosphate + NADP(+) = N-acetyl-L-glutamyl 5-phosphate + NADPH + H(+)</text>
        <dbReference type="Rhea" id="RHEA:21588"/>
        <dbReference type="ChEBI" id="CHEBI:15378"/>
        <dbReference type="ChEBI" id="CHEBI:29123"/>
        <dbReference type="ChEBI" id="CHEBI:43474"/>
        <dbReference type="ChEBI" id="CHEBI:57783"/>
        <dbReference type="ChEBI" id="CHEBI:57936"/>
        <dbReference type="ChEBI" id="CHEBI:58349"/>
        <dbReference type="EC" id="1.2.1.38"/>
    </reaction>
</comment>
<comment type="pathway">
    <text evidence="1">Amino-acid biosynthesis; L-arginine biosynthesis; N(2)-acetyl-L-ornithine from L-glutamate: step 3/4.</text>
</comment>
<comment type="subcellular location">
    <subcellularLocation>
        <location evidence="1">Cytoplasm</location>
    </subcellularLocation>
</comment>
<comment type="similarity">
    <text evidence="1">Belongs to the NAGSA dehydrogenase family. Type 1 subfamily.</text>
</comment>